<gene>
    <name evidence="1" type="primary">uvrC</name>
    <name type="ordered locus">FMG_0375</name>
</gene>
<proteinExistence type="inferred from homology"/>
<name>UVRC_FINM2</name>
<keyword id="KW-0963">Cytoplasm</keyword>
<keyword id="KW-0227">DNA damage</keyword>
<keyword id="KW-0228">DNA excision</keyword>
<keyword id="KW-0234">DNA repair</keyword>
<keyword id="KW-0267">Excision nuclease</keyword>
<keyword id="KW-1185">Reference proteome</keyword>
<keyword id="KW-0742">SOS response</keyword>
<sequence length="608" mass="71185">MFDIKKELQKVPHKPGVYIMHDKNDEIIYVGKAIDLRRRVGQYFDSSKKLAKVAAMVSHVEYFEYIIVNNECEALVLESNLIKKNSPKYNIVLRDDKQYPYIKITNEKFPRVLKTRRVLKDKAKYFGPFPNAYAVNDIIDLIHETYKIRTCNLNFDKGQKLKRPCLNYYINRCDGMCVYDVNEEDYNKELLEVENFLNGREDELTKKLTDKMMAASKNLNFELAAKLRDSITNIQVILEKQNITNTKGLDLDMISMAREAETVCVQVFFMRNGKIIERQHFIIDNKYEESNEHIVGEFFKQFYIDLTYVPKQILTDIEIEDRDLIEEMLTEKKGSKVEIKIPKRGNKTDLLEMVRVNAKEGLDKYISRHLKRERNRENAILDLQDITGVKPIDRIECYDISNTSGVDSVGSMIVFKNGAKSSKDYRKFKIKTVEGADDYASHREVLTRRFRRLLDSDKKDNSFDEMPSIILMDGGKGQVNIAKEVLNEFNLDIPILGLVKDDKHRTRGIIYENEEIRLKVNTPLYRLLFAIQEETHRFAINYHRKLHEKNFKKSELDNIALIGEKRKKALMKHFKTLDRIKKASVEELCEVDGMNEKAAENIVNYFKQ</sequence>
<organism>
    <name type="scientific">Finegoldia magna (strain ATCC 29328 / DSM 20472 / WAL 2508)</name>
    <name type="common">Peptostreptococcus magnus</name>
    <dbReference type="NCBI Taxonomy" id="334413"/>
    <lineage>
        <taxon>Bacteria</taxon>
        <taxon>Bacillati</taxon>
        <taxon>Bacillota</taxon>
        <taxon>Tissierellia</taxon>
        <taxon>Tissierellales</taxon>
        <taxon>Peptoniphilaceae</taxon>
        <taxon>Finegoldia</taxon>
    </lineage>
</organism>
<evidence type="ECO:0000255" key="1">
    <source>
        <dbReference type="HAMAP-Rule" id="MF_00203"/>
    </source>
</evidence>
<feature type="chain" id="PRO_1000099482" description="UvrABC system protein C">
    <location>
        <begin position="1"/>
        <end position="608"/>
    </location>
</feature>
<feature type="domain" description="GIY-YIG" evidence="1">
    <location>
        <begin position="13"/>
        <end position="91"/>
    </location>
</feature>
<feature type="domain" description="UVR" evidence="1">
    <location>
        <begin position="202"/>
        <end position="237"/>
    </location>
</feature>
<comment type="function">
    <text evidence="1">The UvrABC repair system catalyzes the recognition and processing of DNA lesions. UvrC both incises the 5' and 3' sides of the lesion. The N-terminal half is responsible for the 3' incision and the C-terminal half is responsible for the 5' incision.</text>
</comment>
<comment type="subunit">
    <text evidence="1">Interacts with UvrB in an incision complex.</text>
</comment>
<comment type="subcellular location">
    <subcellularLocation>
        <location evidence="1">Cytoplasm</location>
    </subcellularLocation>
</comment>
<comment type="similarity">
    <text evidence="1">Belongs to the UvrC family.</text>
</comment>
<accession>B0S0L4</accession>
<reference key="1">
    <citation type="journal article" date="2008" name="DNA Res.">
        <title>Complete genome sequence of Finegoldia magna, an anaerobic opportunistic pathogen.</title>
        <authorList>
            <person name="Goto T."/>
            <person name="Yamashita A."/>
            <person name="Hirakawa H."/>
            <person name="Matsutani M."/>
            <person name="Todo K."/>
            <person name="Ohshima K."/>
            <person name="Toh H."/>
            <person name="Miyamoto K."/>
            <person name="Kuhara S."/>
            <person name="Hattori M."/>
            <person name="Shimizu T."/>
            <person name="Akimoto S."/>
        </authorList>
    </citation>
    <scope>NUCLEOTIDE SEQUENCE [LARGE SCALE GENOMIC DNA]</scope>
    <source>
        <strain>ATCC 29328 / DSM 20472 / WAL 2508</strain>
    </source>
</reference>
<protein>
    <recommendedName>
        <fullName evidence="1">UvrABC system protein C</fullName>
        <shortName evidence="1">Protein UvrC</shortName>
    </recommendedName>
    <alternativeName>
        <fullName evidence="1">Excinuclease ABC subunit C</fullName>
    </alternativeName>
</protein>
<dbReference type="EMBL" id="AP008971">
    <property type="protein sequence ID" value="BAG07793.1"/>
    <property type="molecule type" value="Genomic_DNA"/>
</dbReference>
<dbReference type="RefSeq" id="WP_012290365.1">
    <property type="nucleotide sequence ID" value="NC_010376.1"/>
</dbReference>
<dbReference type="SMR" id="B0S0L4"/>
<dbReference type="STRING" id="334413.FMG_0375"/>
<dbReference type="KEGG" id="fma:FMG_0375"/>
<dbReference type="eggNOG" id="COG0322">
    <property type="taxonomic scope" value="Bacteria"/>
</dbReference>
<dbReference type="HOGENOM" id="CLU_014841_3_2_9"/>
<dbReference type="Proteomes" id="UP000001319">
    <property type="component" value="Chromosome"/>
</dbReference>
<dbReference type="GO" id="GO:0005737">
    <property type="term" value="C:cytoplasm"/>
    <property type="evidence" value="ECO:0007669"/>
    <property type="project" value="UniProtKB-SubCell"/>
</dbReference>
<dbReference type="GO" id="GO:0009380">
    <property type="term" value="C:excinuclease repair complex"/>
    <property type="evidence" value="ECO:0007669"/>
    <property type="project" value="InterPro"/>
</dbReference>
<dbReference type="GO" id="GO:0003677">
    <property type="term" value="F:DNA binding"/>
    <property type="evidence" value="ECO:0007669"/>
    <property type="project" value="UniProtKB-UniRule"/>
</dbReference>
<dbReference type="GO" id="GO:0009381">
    <property type="term" value="F:excinuclease ABC activity"/>
    <property type="evidence" value="ECO:0007669"/>
    <property type="project" value="UniProtKB-UniRule"/>
</dbReference>
<dbReference type="GO" id="GO:0006289">
    <property type="term" value="P:nucleotide-excision repair"/>
    <property type="evidence" value="ECO:0007669"/>
    <property type="project" value="UniProtKB-UniRule"/>
</dbReference>
<dbReference type="GO" id="GO:0009432">
    <property type="term" value="P:SOS response"/>
    <property type="evidence" value="ECO:0007669"/>
    <property type="project" value="UniProtKB-UniRule"/>
</dbReference>
<dbReference type="CDD" id="cd10434">
    <property type="entry name" value="GIY-YIG_UvrC_Cho"/>
    <property type="match status" value="1"/>
</dbReference>
<dbReference type="FunFam" id="3.40.1440.10:FF:000001">
    <property type="entry name" value="UvrABC system protein C"/>
    <property type="match status" value="1"/>
</dbReference>
<dbReference type="Gene3D" id="1.10.150.20">
    <property type="entry name" value="5' to 3' exonuclease, C-terminal subdomain"/>
    <property type="match status" value="1"/>
</dbReference>
<dbReference type="Gene3D" id="3.40.1440.10">
    <property type="entry name" value="GIY-YIG endonuclease"/>
    <property type="match status" value="1"/>
</dbReference>
<dbReference type="Gene3D" id="4.10.860.10">
    <property type="entry name" value="UVR domain"/>
    <property type="match status" value="1"/>
</dbReference>
<dbReference type="Gene3D" id="3.30.420.340">
    <property type="entry name" value="UvrC, RNAse H endonuclease domain"/>
    <property type="match status" value="1"/>
</dbReference>
<dbReference type="HAMAP" id="MF_00203">
    <property type="entry name" value="UvrC"/>
    <property type="match status" value="1"/>
</dbReference>
<dbReference type="InterPro" id="IPR041663">
    <property type="entry name" value="DisA/LigA_HHH"/>
</dbReference>
<dbReference type="InterPro" id="IPR000305">
    <property type="entry name" value="GIY-YIG_endonuc"/>
</dbReference>
<dbReference type="InterPro" id="IPR035901">
    <property type="entry name" value="GIY-YIG_endonuc_sf"/>
</dbReference>
<dbReference type="InterPro" id="IPR047296">
    <property type="entry name" value="GIY-YIG_UvrC_Cho"/>
</dbReference>
<dbReference type="InterPro" id="IPR003583">
    <property type="entry name" value="Hlx-hairpin-Hlx_DNA-bd_motif"/>
</dbReference>
<dbReference type="InterPro" id="IPR010994">
    <property type="entry name" value="RuvA_2-like"/>
</dbReference>
<dbReference type="InterPro" id="IPR001943">
    <property type="entry name" value="UVR_dom"/>
</dbReference>
<dbReference type="InterPro" id="IPR036876">
    <property type="entry name" value="UVR_dom_sf"/>
</dbReference>
<dbReference type="InterPro" id="IPR050066">
    <property type="entry name" value="UvrABC_protein_C"/>
</dbReference>
<dbReference type="InterPro" id="IPR004791">
    <property type="entry name" value="UvrC"/>
</dbReference>
<dbReference type="InterPro" id="IPR001162">
    <property type="entry name" value="UvrC_RNase_H_dom"/>
</dbReference>
<dbReference type="InterPro" id="IPR038476">
    <property type="entry name" value="UvrC_RNase_H_dom_sf"/>
</dbReference>
<dbReference type="NCBIfam" id="NF001824">
    <property type="entry name" value="PRK00558.1-5"/>
    <property type="match status" value="1"/>
</dbReference>
<dbReference type="NCBIfam" id="TIGR00194">
    <property type="entry name" value="uvrC"/>
    <property type="match status" value="1"/>
</dbReference>
<dbReference type="PANTHER" id="PTHR30562:SF1">
    <property type="entry name" value="UVRABC SYSTEM PROTEIN C"/>
    <property type="match status" value="1"/>
</dbReference>
<dbReference type="PANTHER" id="PTHR30562">
    <property type="entry name" value="UVRC/OXIDOREDUCTASE"/>
    <property type="match status" value="1"/>
</dbReference>
<dbReference type="Pfam" id="PF01541">
    <property type="entry name" value="GIY-YIG"/>
    <property type="match status" value="1"/>
</dbReference>
<dbReference type="Pfam" id="PF12826">
    <property type="entry name" value="HHH_2"/>
    <property type="match status" value="1"/>
</dbReference>
<dbReference type="Pfam" id="PF02151">
    <property type="entry name" value="UVR"/>
    <property type="match status" value="1"/>
</dbReference>
<dbReference type="Pfam" id="PF22920">
    <property type="entry name" value="UvrC_RNaseH"/>
    <property type="match status" value="1"/>
</dbReference>
<dbReference type="Pfam" id="PF08459">
    <property type="entry name" value="UvrC_RNaseH_dom"/>
    <property type="match status" value="1"/>
</dbReference>
<dbReference type="SMART" id="SM00465">
    <property type="entry name" value="GIYc"/>
    <property type="match status" value="1"/>
</dbReference>
<dbReference type="SMART" id="SM00278">
    <property type="entry name" value="HhH1"/>
    <property type="match status" value="2"/>
</dbReference>
<dbReference type="SUPFAM" id="SSF46600">
    <property type="entry name" value="C-terminal UvrC-binding domain of UvrB"/>
    <property type="match status" value="1"/>
</dbReference>
<dbReference type="SUPFAM" id="SSF82771">
    <property type="entry name" value="GIY-YIG endonuclease"/>
    <property type="match status" value="1"/>
</dbReference>
<dbReference type="SUPFAM" id="SSF47781">
    <property type="entry name" value="RuvA domain 2-like"/>
    <property type="match status" value="1"/>
</dbReference>
<dbReference type="PROSITE" id="PS50164">
    <property type="entry name" value="GIY_YIG"/>
    <property type="match status" value="1"/>
</dbReference>
<dbReference type="PROSITE" id="PS50151">
    <property type="entry name" value="UVR"/>
    <property type="match status" value="1"/>
</dbReference>
<dbReference type="PROSITE" id="PS50165">
    <property type="entry name" value="UVRC"/>
    <property type="match status" value="1"/>
</dbReference>